<feature type="chain" id="PRO_0000036207" description="Putative HTH-type transcriptional regulator NMA1593">
    <location>
        <begin position="1"/>
        <end position="148"/>
    </location>
</feature>
<feature type="domain" description="HTH rrf2-type" evidence="1">
    <location>
        <begin position="2"/>
        <end position="131"/>
    </location>
</feature>
<accession>P0A0Y9</accession>
<accession>A1ISH9</accession>
<accession>Q51134</accession>
<protein>
    <recommendedName>
        <fullName>Putative HTH-type transcriptional regulator NMA1593</fullName>
    </recommendedName>
</protein>
<sequence length="148" mass="15985">MRLTTKGRFAVTAMLDLAMNAQTGAVKLSAISERQNISLSYLEQLFGKLRRAGLVESLRGPGGGYILAAPAARINIAQIIAAAEDRLDATQCGSKANCHHGAPCLTHDLWENLNKTINDYLGSVTLQSIIEQKNNGDGSRVVQFTHIH</sequence>
<organism>
    <name type="scientific">Neisseria meningitidis serogroup A / serotype 4A (strain DSM 15465 / Z2491)</name>
    <dbReference type="NCBI Taxonomy" id="122587"/>
    <lineage>
        <taxon>Bacteria</taxon>
        <taxon>Pseudomonadati</taxon>
        <taxon>Pseudomonadota</taxon>
        <taxon>Betaproteobacteria</taxon>
        <taxon>Neisseriales</taxon>
        <taxon>Neisseriaceae</taxon>
        <taxon>Neisseria</taxon>
    </lineage>
</organism>
<name>Y1593_NEIMA</name>
<gene>
    <name type="ordered locus">NMA1593</name>
</gene>
<keyword id="KW-0238">DNA-binding</keyword>
<proteinExistence type="predicted"/>
<evidence type="ECO:0000255" key="1">
    <source>
        <dbReference type="PROSITE-ProRule" id="PRU00540"/>
    </source>
</evidence>
<dbReference type="EMBL" id="AL157959">
    <property type="protein sequence ID" value="CAM08736.1"/>
    <property type="molecule type" value="Genomic_DNA"/>
</dbReference>
<dbReference type="PIR" id="D81852">
    <property type="entry name" value="D81852"/>
</dbReference>
<dbReference type="SMR" id="P0A0Y9"/>
<dbReference type="EnsemblBacteria" id="CAM08736">
    <property type="protein sequence ID" value="CAM08736"/>
    <property type="gene ID" value="NMA1593"/>
</dbReference>
<dbReference type="KEGG" id="nma:NMA1593"/>
<dbReference type="HOGENOM" id="CLU_107144_0_0_4"/>
<dbReference type="Proteomes" id="UP000000626">
    <property type="component" value="Chromosome"/>
</dbReference>
<dbReference type="GO" id="GO:0005829">
    <property type="term" value="C:cytosol"/>
    <property type="evidence" value="ECO:0007669"/>
    <property type="project" value="TreeGrafter"/>
</dbReference>
<dbReference type="GO" id="GO:0003700">
    <property type="term" value="F:DNA-binding transcription factor activity"/>
    <property type="evidence" value="ECO:0007669"/>
    <property type="project" value="InterPro"/>
</dbReference>
<dbReference type="GO" id="GO:0003690">
    <property type="term" value="F:double-stranded DNA binding"/>
    <property type="evidence" value="ECO:0007669"/>
    <property type="project" value="InterPro"/>
</dbReference>
<dbReference type="FunFam" id="1.10.10.10:FF:000026">
    <property type="entry name" value="HTH-type transcriptional regulator IscR"/>
    <property type="match status" value="1"/>
</dbReference>
<dbReference type="Gene3D" id="1.10.10.10">
    <property type="entry name" value="Winged helix-like DNA-binding domain superfamily/Winged helix DNA-binding domain"/>
    <property type="match status" value="1"/>
</dbReference>
<dbReference type="InterPro" id="IPR010242">
    <property type="entry name" value="TF_HTH_IscR"/>
</dbReference>
<dbReference type="InterPro" id="IPR030489">
    <property type="entry name" value="TR_Rrf2-type_CS"/>
</dbReference>
<dbReference type="InterPro" id="IPR000944">
    <property type="entry name" value="Tscrpt_reg_Rrf2"/>
</dbReference>
<dbReference type="InterPro" id="IPR036388">
    <property type="entry name" value="WH-like_DNA-bd_sf"/>
</dbReference>
<dbReference type="InterPro" id="IPR036390">
    <property type="entry name" value="WH_DNA-bd_sf"/>
</dbReference>
<dbReference type="NCBIfam" id="TIGR02010">
    <property type="entry name" value="IscR"/>
    <property type="match status" value="1"/>
</dbReference>
<dbReference type="NCBIfam" id="TIGR00738">
    <property type="entry name" value="rrf2_super"/>
    <property type="match status" value="1"/>
</dbReference>
<dbReference type="PANTHER" id="PTHR33221:SF5">
    <property type="entry name" value="HTH-TYPE TRANSCRIPTIONAL REGULATOR ISCR"/>
    <property type="match status" value="1"/>
</dbReference>
<dbReference type="PANTHER" id="PTHR33221">
    <property type="entry name" value="WINGED HELIX-TURN-HELIX TRANSCRIPTIONAL REGULATOR, RRF2 FAMILY"/>
    <property type="match status" value="1"/>
</dbReference>
<dbReference type="Pfam" id="PF02082">
    <property type="entry name" value="Rrf2"/>
    <property type="match status" value="1"/>
</dbReference>
<dbReference type="SUPFAM" id="SSF46785">
    <property type="entry name" value="Winged helix' DNA-binding domain"/>
    <property type="match status" value="1"/>
</dbReference>
<dbReference type="PROSITE" id="PS01332">
    <property type="entry name" value="HTH_RRF2_1"/>
    <property type="match status" value="1"/>
</dbReference>
<dbReference type="PROSITE" id="PS51197">
    <property type="entry name" value="HTH_RRF2_2"/>
    <property type="match status" value="1"/>
</dbReference>
<reference key="1">
    <citation type="journal article" date="2000" name="Nature">
        <title>Complete DNA sequence of a serogroup A strain of Neisseria meningitidis Z2491.</title>
        <authorList>
            <person name="Parkhill J."/>
            <person name="Achtman M."/>
            <person name="James K.D."/>
            <person name="Bentley S.D."/>
            <person name="Churcher C.M."/>
            <person name="Klee S.R."/>
            <person name="Morelli G."/>
            <person name="Basham D."/>
            <person name="Brown D."/>
            <person name="Chillingworth T."/>
            <person name="Davies R.M."/>
            <person name="Davis P."/>
            <person name="Devlin K."/>
            <person name="Feltwell T."/>
            <person name="Hamlin N."/>
            <person name="Holroyd S."/>
            <person name="Jagels K."/>
            <person name="Leather S."/>
            <person name="Moule S."/>
            <person name="Mungall K.L."/>
            <person name="Quail M.A."/>
            <person name="Rajandream M.A."/>
            <person name="Rutherford K.M."/>
            <person name="Simmonds M."/>
            <person name="Skelton J."/>
            <person name="Whitehead S."/>
            <person name="Spratt B.G."/>
            <person name="Barrell B.G."/>
        </authorList>
    </citation>
    <scope>NUCLEOTIDE SEQUENCE [LARGE SCALE GENOMIC DNA]</scope>
    <source>
        <strain>DSM 15465 / Z2491</strain>
    </source>
</reference>